<proteinExistence type="inferred from homology"/>
<protein>
    <recommendedName>
        <fullName evidence="1">23S rRNA (uracil(1939)-C(5))-methyltransferase RlmD</fullName>
        <ecNumber evidence="1">2.1.1.190</ecNumber>
    </recommendedName>
    <alternativeName>
        <fullName evidence="1">23S rRNA(m5U1939)-methyltransferase</fullName>
    </alternativeName>
</protein>
<keyword id="KW-0004">4Fe-4S</keyword>
<keyword id="KW-0408">Iron</keyword>
<keyword id="KW-0411">Iron-sulfur</keyword>
<keyword id="KW-0479">Metal-binding</keyword>
<keyword id="KW-0489">Methyltransferase</keyword>
<keyword id="KW-1185">Reference proteome</keyword>
<keyword id="KW-0698">rRNA processing</keyword>
<keyword id="KW-0949">S-adenosyl-L-methionine</keyword>
<keyword id="KW-0808">Transferase</keyword>
<name>RLMD_XYLFT</name>
<gene>
    <name evidence="1" type="primary">rlmD</name>
    <name type="synonym">rumA</name>
    <name type="ordered locus">PD_1385</name>
</gene>
<comment type="function">
    <text evidence="1">Catalyzes the formation of 5-methyl-uridine at position 1939 (m5U1939) in 23S rRNA.</text>
</comment>
<comment type="catalytic activity">
    <reaction evidence="1">
        <text>uridine(1939) in 23S rRNA + S-adenosyl-L-methionine = 5-methyluridine(1939) in 23S rRNA + S-adenosyl-L-homocysteine + H(+)</text>
        <dbReference type="Rhea" id="RHEA:42908"/>
        <dbReference type="Rhea" id="RHEA-COMP:10278"/>
        <dbReference type="Rhea" id="RHEA-COMP:10279"/>
        <dbReference type="ChEBI" id="CHEBI:15378"/>
        <dbReference type="ChEBI" id="CHEBI:57856"/>
        <dbReference type="ChEBI" id="CHEBI:59789"/>
        <dbReference type="ChEBI" id="CHEBI:65315"/>
        <dbReference type="ChEBI" id="CHEBI:74447"/>
        <dbReference type="EC" id="2.1.1.190"/>
    </reaction>
</comment>
<comment type="similarity">
    <text evidence="1">Belongs to the class I-like SAM-binding methyltransferase superfamily. RNA M5U methyltransferase family. RlmD subfamily.</text>
</comment>
<feature type="chain" id="PRO_0000161924" description="23S rRNA (uracil(1939)-C(5))-methyltransferase RlmD">
    <location>
        <begin position="1"/>
        <end position="443"/>
    </location>
</feature>
<feature type="domain" description="TRAM" evidence="1">
    <location>
        <begin position="4"/>
        <end position="66"/>
    </location>
</feature>
<feature type="active site" description="Nucleophile" evidence="1">
    <location>
        <position position="399"/>
    </location>
</feature>
<feature type="binding site" evidence="1">
    <location>
        <position position="79"/>
    </location>
    <ligand>
        <name>[4Fe-4S] cluster</name>
        <dbReference type="ChEBI" id="CHEBI:49883"/>
    </ligand>
</feature>
<feature type="binding site" evidence="1">
    <location>
        <position position="85"/>
    </location>
    <ligand>
        <name>[4Fe-4S] cluster</name>
        <dbReference type="ChEBI" id="CHEBI:49883"/>
    </ligand>
</feature>
<feature type="binding site" evidence="1">
    <location>
        <position position="88"/>
    </location>
    <ligand>
        <name>[4Fe-4S] cluster</name>
        <dbReference type="ChEBI" id="CHEBI:49883"/>
    </ligand>
</feature>
<feature type="binding site" evidence="1">
    <location>
        <position position="167"/>
    </location>
    <ligand>
        <name>[4Fe-4S] cluster</name>
        <dbReference type="ChEBI" id="CHEBI:49883"/>
    </ligand>
</feature>
<feature type="binding site" evidence="1">
    <location>
        <position position="275"/>
    </location>
    <ligand>
        <name>S-adenosyl-L-methionine</name>
        <dbReference type="ChEBI" id="CHEBI:59789"/>
    </ligand>
</feature>
<feature type="binding site" evidence="1">
    <location>
        <position position="304"/>
    </location>
    <ligand>
        <name>S-adenosyl-L-methionine</name>
        <dbReference type="ChEBI" id="CHEBI:59789"/>
    </ligand>
</feature>
<feature type="binding site" evidence="1">
    <location>
        <position position="309"/>
    </location>
    <ligand>
        <name>S-adenosyl-L-methionine</name>
        <dbReference type="ChEBI" id="CHEBI:59789"/>
    </ligand>
</feature>
<feature type="binding site" evidence="1">
    <location>
        <position position="325"/>
    </location>
    <ligand>
        <name>S-adenosyl-L-methionine</name>
        <dbReference type="ChEBI" id="CHEBI:59789"/>
    </ligand>
</feature>
<feature type="binding site" evidence="1">
    <location>
        <position position="352"/>
    </location>
    <ligand>
        <name>S-adenosyl-L-methionine</name>
        <dbReference type="ChEBI" id="CHEBI:59789"/>
    </ligand>
</feature>
<feature type="binding site" evidence="1">
    <location>
        <position position="373"/>
    </location>
    <ligand>
        <name>S-adenosyl-L-methionine</name>
        <dbReference type="ChEBI" id="CHEBI:59789"/>
    </ligand>
</feature>
<sequence>MARQNRFDRTSFQTQIIDLSHDGRGVARPHGEGGKVTFVTGALPGEVVIVEPVARNRHFDEARVVEVLQASPQRVIPRCSHFGVCSGCVLQHLAEDAQVVSKQRVLLESLERIGCVSPERVLPALAAESWGYRRKGRFSVRWVEKKGRTLVGFREHDPRFVADVSVCHTVVPQVGEKIALLATLLDSLDGRCDVPQIEFIAGDAVVALTVRHLQPLSEADRLALIEFGKEHGIAIFLQSGGVESVRLLWPDEVLLAFRLKPWDVEFVFRPLDFIQINGGLNEKMIAHALDLLGAGFGERVLDLFCGLGNFTLPLARTVGEVVGVEGDIGLVERARENARRNGLGNAEFFVADLTRDQRDAPWMRQGFDKLLLDPPRSGAIEVLKQLPLKMFERIVYVSCHPGSLARDADFLVNEQGFVLRAVGAMDMFPHTAHVESIAVFDRC</sequence>
<reference key="1">
    <citation type="journal article" date="2003" name="J. Bacteriol.">
        <title>Comparative analyses of the complete genome sequences of Pierce's disease and citrus variegated chlorosis strains of Xylella fastidiosa.</title>
        <authorList>
            <person name="Van Sluys M.A."/>
            <person name="de Oliveira M.C."/>
            <person name="Monteiro-Vitorello C.B."/>
            <person name="Miyaki C.Y."/>
            <person name="Furlan L.R."/>
            <person name="Camargo L.E.A."/>
            <person name="da Silva A.C.R."/>
            <person name="Moon D.H."/>
            <person name="Takita M.A."/>
            <person name="Lemos E.G.M."/>
            <person name="Machado M.A."/>
            <person name="Ferro M.I.T."/>
            <person name="da Silva F.R."/>
            <person name="Goldman M.H.S."/>
            <person name="Goldman G.H."/>
            <person name="Lemos M.V.F."/>
            <person name="El-Dorry H."/>
            <person name="Tsai S.M."/>
            <person name="Carrer H."/>
            <person name="Carraro D.M."/>
            <person name="de Oliveira R.C."/>
            <person name="Nunes L.R."/>
            <person name="Siqueira W.J."/>
            <person name="Coutinho L.L."/>
            <person name="Kimura E.T."/>
            <person name="Ferro E.S."/>
            <person name="Harakava R."/>
            <person name="Kuramae E.E."/>
            <person name="Marino C.L."/>
            <person name="Giglioti E."/>
            <person name="Abreu I.L."/>
            <person name="Alves L.M.C."/>
            <person name="do Amaral A.M."/>
            <person name="Baia G.S."/>
            <person name="Blanco S.R."/>
            <person name="Brito M.S."/>
            <person name="Cannavan F.S."/>
            <person name="Celestino A.V."/>
            <person name="da Cunha A.F."/>
            <person name="Fenille R.C."/>
            <person name="Ferro J.A."/>
            <person name="Formighieri E.F."/>
            <person name="Kishi L.T."/>
            <person name="Leoni S.G."/>
            <person name="Oliveira A.R."/>
            <person name="Rosa V.E. Jr."/>
            <person name="Sassaki F.T."/>
            <person name="Sena J.A.D."/>
            <person name="de Souza A.A."/>
            <person name="Truffi D."/>
            <person name="Tsukumo F."/>
            <person name="Yanai G.M."/>
            <person name="Zaros L.G."/>
            <person name="Civerolo E.L."/>
            <person name="Simpson A.J.G."/>
            <person name="Almeida N.F. Jr."/>
            <person name="Setubal J.C."/>
            <person name="Kitajima J.P."/>
        </authorList>
    </citation>
    <scope>NUCLEOTIDE SEQUENCE [LARGE SCALE GENOMIC DNA]</scope>
    <source>
        <strain>Temecula1 / ATCC 700964</strain>
    </source>
</reference>
<organism>
    <name type="scientific">Xylella fastidiosa (strain Temecula1 / ATCC 700964)</name>
    <dbReference type="NCBI Taxonomy" id="183190"/>
    <lineage>
        <taxon>Bacteria</taxon>
        <taxon>Pseudomonadati</taxon>
        <taxon>Pseudomonadota</taxon>
        <taxon>Gammaproteobacteria</taxon>
        <taxon>Lysobacterales</taxon>
        <taxon>Lysobacteraceae</taxon>
        <taxon>Xylella</taxon>
    </lineage>
</organism>
<accession>Q87BR3</accession>
<evidence type="ECO:0000255" key="1">
    <source>
        <dbReference type="HAMAP-Rule" id="MF_01010"/>
    </source>
</evidence>
<dbReference type="EC" id="2.1.1.190" evidence="1"/>
<dbReference type="EMBL" id="AE009442">
    <property type="protein sequence ID" value="AAO29232.1"/>
    <property type="molecule type" value="Genomic_DNA"/>
</dbReference>
<dbReference type="RefSeq" id="WP_011098083.1">
    <property type="nucleotide sequence ID" value="NC_004556.1"/>
</dbReference>
<dbReference type="SMR" id="Q87BR3"/>
<dbReference type="GeneID" id="93905202"/>
<dbReference type="KEGG" id="xft:PD_1385"/>
<dbReference type="HOGENOM" id="CLU_014689_8_2_6"/>
<dbReference type="Proteomes" id="UP000002516">
    <property type="component" value="Chromosome"/>
</dbReference>
<dbReference type="GO" id="GO:0051539">
    <property type="term" value="F:4 iron, 4 sulfur cluster binding"/>
    <property type="evidence" value="ECO:0007669"/>
    <property type="project" value="UniProtKB-KW"/>
</dbReference>
<dbReference type="GO" id="GO:0005506">
    <property type="term" value="F:iron ion binding"/>
    <property type="evidence" value="ECO:0007669"/>
    <property type="project" value="UniProtKB-UniRule"/>
</dbReference>
<dbReference type="GO" id="GO:0003723">
    <property type="term" value="F:RNA binding"/>
    <property type="evidence" value="ECO:0007669"/>
    <property type="project" value="InterPro"/>
</dbReference>
<dbReference type="GO" id="GO:0070041">
    <property type="term" value="F:rRNA (uridine-C5-)-methyltransferase activity"/>
    <property type="evidence" value="ECO:0007669"/>
    <property type="project" value="UniProtKB-UniRule"/>
</dbReference>
<dbReference type="GO" id="GO:0070475">
    <property type="term" value="P:rRNA base methylation"/>
    <property type="evidence" value="ECO:0007669"/>
    <property type="project" value="TreeGrafter"/>
</dbReference>
<dbReference type="CDD" id="cd02440">
    <property type="entry name" value="AdoMet_MTases"/>
    <property type="match status" value="1"/>
</dbReference>
<dbReference type="FunFam" id="2.40.50.140:FF:000097">
    <property type="entry name" value="23S rRNA (uracil(1939)-C(5))-methyltransferase RlmD"/>
    <property type="match status" value="1"/>
</dbReference>
<dbReference type="Gene3D" id="2.40.50.1070">
    <property type="match status" value="1"/>
</dbReference>
<dbReference type="Gene3D" id="2.40.50.140">
    <property type="entry name" value="Nucleic acid-binding proteins"/>
    <property type="match status" value="1"/>
</dbReference>
<dbReference type="Gene3D" id="3.40.50.150">
    <property type="entry name" value="Vaccinia Virus protein VP39"/>
    <property type="match status" value="1"/>
</dbReference>
<dbReference type="HAMAP" id="MF_01010">
    <property type="entry name" value="23SrRNA_methyltr_RlmD"/>
    <property type="match status" value="1"/>
</dbReference>
<dbReference type="InterPro" id="IPR001566">
    <property type="entry name" value="23S_rRNA_MeTrfase_RlmD"/>
</dbReference>
<dbReference type="InterPro" id="IPR030390">
    <property type="entry name" value="MeTrfase_TrmA_AS"/>
</dbReference>
<dbReference type="InterPro" id="IPR030391">
    <property type="entry name" value="MeTrfase_TrmA_CS"/>
</dbReference>
<dbReference type="InterPro" id="IPR012340">
    <property type="entry name" value="NA-bd_OB-fold"/>
</dbReference>
<dbReference type="InterPro" id="IPR029063">
    <property type="entry name" value="SAM-dependent_MTases_sf"/>
</dbReference>
<dbReference type="InterPro" id="IPR002792">
    <property type="entry name" value="TRAM_dom"/>
</dbReference>
<dbReference type="InterPro" id="IPR010280">
    <property type="entry name" value="U5_MeTrfase_fam"/>
</dbReference>
<dbReference type="NCBIfam" id="NF009639">
    <property type="entry name" value="PRK13168.1"/>
    <property type="match status" value="1"/>
</dbReference>
<dbReference type="NCBIfam" id="TIGR00479">
    <property type="entry name" value="rumA"/>
    <property type="match status" value="1"/>
</dbReference>
<dbReference type="PANTHER" id="PTHR11061:SF49">
    <property type="entry name" value="23S RRNA (URACIL(1939)-C(5))-METHYLTRANSFERASE RLMD"/>
    <property type="match status" value="1"/>
</dbReference>
<dbReference type="PANTHER" id="PTHR11061">
    <property type="entry name" value="RNA M5U METHYLTRANSFERASE"/>
    <property type="match status" value="1"/>
</dbReference>
<dbReference type="Pfam" id="PF05958">
    <property type="entry name" value="tRNA_U5-meth_tr"/>
    <property type="match status" value="1"/>
</dbReference>
<dbReference type="SUPFAM" id="SSF50249">
    <property type="entry name" value="Nucleic acid-binding proteins"/>
    <property type="match status" value="1"/>
</dbReference>
<dbReference type="SUPFAM" id="SSF53335">
    <property type="entry name" value="S-adenosyl-L-methionine-dependent methyltransferases"/>
    <property type="match status" value="1"/>
</dbReference>
<dbReference type="PROSITE" id="PS51687">
    <property type="entry name" value="SAM_MT_RNA_M5U"/>
    <property type="match status" value="1"/>
</dbReference>
<dbReference type="PROSITE" id="PS50926">
    <property type="entry name" value="TRAM"/>
    <property type="match status" value="1"/>
</dbReference>
<dbReference type="PROSITE" id="PS01230">
    <property type="entry name" value="TRMA_1"/>
    <property type="match status" value="1"/>
</dbReference>
<dbReference type="PROSITE" id="PS01231">
    <property type="entry name" value="TRMA_2"/>
    <property type="match status" value="1"/>
</dbReference>